<protein>
    <recommendedName>
        <fullName>Cytochrome c2</fullName>
    </recommendedName>
</protein>
<evidence type="ECO:0000250" key="1">
    <source>
        <dbReference type="UniProtKB" id="P00090"/>
    </source>
</evidence>
<evidence type="ECO:0000269" key="2">
    <source>
    </source>
</evidence>
<evidence type="ECO:0000305" key="3"/>
<evidence type="ECO:0007829" key="4">
    <source>
        <dbReference type="PDB" id="1I8O"/>
    </source>
</evidence>
<gene>
    <name type="primary">cycA</name>
    <name type="ordered locus">RPA1535</name>
</gene>
<keyword id="KW-0002">3D-structure</keyword>
<keyword id="KW-0903">Direct protein sequencing</keyword>
<keyword id="KW-0249">Electron transport</keyword>
<keyword id="KW-0349">Heme</keyword>
<keyword id="KW-0408">Iron</keyword>
<keyword id="KW-0479">Metal-binding</keyword>
<keyword id="KW-0602">Photosynthesis</keyword>
<keyword id="KW-0873">Pyrrolidone carboxylic acid</keyword>
<keyword id="KW-0732">Signal</keyword>
<keyword id="KW-0813">Transport</keyword>
<sequence length="139" mass="14633">MVKKLLTILSIAATAGSLSIGTASAQDAKAGEAVFKQCMTCHRADKNMVGPALGGVVGRKAGTAAGFTYSPLNHNSGEAGLVWTADNIINYLNDPNAFLKKFLTDKGKADQAVGVTKMTFKLANEQQRKDVVAYLATLK</sequence>
<name>CYC22_RHOPA</name>
<dbReference type="EMBL" id="BX572597">
    <property type="protein sequence ID" value="CAE26977.1"/>
    <property type="molecule type" value="Genomic_DNA"/>
</dbReference>
<dbReference type="PIR" id="A00083">
    <property type="entry name" value="CCRF7P"/>
</dbReference>
<dbReference type="RefSeq" id="WP_011157096.1">
    <property type="nucleotide sequence ID" value="NZ_CP116810.1"/>
</dbReference>
<dbReference type="PDB" id="1FJ0">
    <property type="method" value="X-ray"/>
    <property type="resolution" value="1.70 A"/>
    <property type="chains" value="A/B/C/D=26-139"/>
</dbReference>
<dbReference type="PDB" id="1HH7">
    <property type="method" value="X-ray"/>
    <property type="resolution" value="1.40 A"/>
    <property type="chains" value="A=27-139"/>
</dbReference>
<dbReference type="PDB" id="1I8O">
    <property type="method" value="X-ray"/>
    <property type="resolution" value="1.15 A"/>
    <property type="chains" value="A=26-139"/>
</dbReference>
<dbReference type="PDB" id="1I8P">
    <property type="method" value="X-ray"/>
    <property type="resolution" value="1.95 A"/>
    <property type="chains" value="A/B/C/D=26-139"/>
</dbReference>
<dbReference type="PDBsum" id="1FJ0"/>
<dbReference type="PDBsum" id="1HH7"/>
<dbReference type="PDBsum" id="1I8O"/>
<dbReference type="PDBsum" id="1I8P"/>
<dbReference type="SMR" id="P00091"/>
<dbReference type="STRING" id="258594.RPA1535"/>
<dbReference type="DrugBank" id="DB03317">
    <property type="generic name" value="Ferroheme C"/>
</dbReference>
<dbReference type="DrugBank" id="DB03088">
    <property type="generic name" value="Pidolic acid"/>
</dbReference>
<dbReference type="eggNOG" id="COG3474">
    <property type="taxonomic scope" value="Bacteria"/>
</dbReference>
<dbReference type="HOGENOM" id="CLU_060944_2_0_5"/>
<dbReference type="PhylomeDB" id="P00091"/>
<dbReference type="EvolutionaryTrace" id="P00091"/>
<dbReference type="GO" id="GO:0009055">
    <property type="term" value="F:electron transfer activity"/>
    <property type="evidence" value="ECO:0007669"/>
    <property type="project" value="InterPro"/>
</dbReference>
<dbReference type="GO" id="GO:0020037">
    <property type="term" value="F:heme binding"/>
    <property type="evidence" value="ECO:0007669"/>
    <property type="project" value="InterPro"/>
</dbReference>
<dbReference type="GO" id="GO:0046872">
    <property type="term" value="F:metal ion binding"/>
    <property type="evidence" value="ECO:0007669"/>
    <property type="project" value="UniProtKB-KW"/>
</dbReference>
<dbReference type="GO" id="GO:0015979">
    <property type="term" value="P:photosynthesis"/>
    <property type="evidence" value="ECO:0007669"/>
    <property type="project" value="UniProtKB-KW"/>
</dbReference>
<dbReference type="Gene3D" id="1.10.760.10">
    <property type="entry name" value="Cytochrome c-like domain"/>
    <property type="match status" value="1"/>
</dbReference>
<dbReference type="InterPro" id="IPR009056">
    <property type="entry name" value="Cyt_c-like_dom"/>
</dbReference>
<dbReference type="InterPro" id="IPR036909">
    <property type="entry name" value="Cyt_c-like_dom_sf"/>
</dbReference>
<dbReference type="InterPro" id="IPR002327">
    <property type="entry name" value="Cyt_c_1A/1B"/>
</dbReference>
<dbReference type="PANTHER" id="PTHR11961">
    <property type="entry name" value="CYTOCHROME C"/>
    <property type="match status" value="1"/>
</dbReference>
<dbReference type="Pfam" id="PF00034">
    <property type="entry name" value="Cytochrom_C"/>
    <property type="match status" value="1"/>
</dbReference>
<dbReference type="PRINTS" id="PR00604">
    <property type="entry name" value="CYTCHRMECIAB"/>
</dbReference>
<dbReference type="SUPFAM" id="SSF46626">
    <property type="entry name" value="Cytochrome c"/>
    <property type="match status" value="1"/>
</dbReference>
<dbReference type="PROSITE" id="PS51007">
    <property type="entry name" value="CYTC"/>
    <property type="match status" value="1"/>
</dbReference>
<accession>P00091</accession>
<feature type="signal peptide" evidence="2">
    <location>
        <begin position="1"/>
        <end position="25"/>
    </location>
</feature>
<feature type="chain" id="PRO_0000006501" description="Cytochrome c2">
    <location>
        <begin position="26"/>
        <end position="139"/>
    </location>
</feature>
<feature type="binding site" description="covalent">
    <location>
        <position position="38"/>
    </location>
    <ligand>
        <name>heme c</name>
        <dbReference type="ChEBI" id="CHEBI:61717"/>
    </ligand>
</feature>
<feature type="binding site" description="covalent">
    <location>
        <position position="41"/>
    </location>
    <ligand>
        <name>heme c</name>
        <dbReference type="ChEBI" id="CHEBI:61717"/>
    </ligand>
</feature>
<feature type="binding site" description="axial binding residue">
    <location>
        <position position="42"/>
    </location>
    <ligand>
        <name>heme c</name>
        <dbReference type="ChEBI" id="CHEBI:61717"/>
    </ligand>
    <ligandPart>
        <name>Fe</name>
        <dbReference type="ChEBI" id="CHEBI:18248"/>
    </ligandPart>
</feature>
<feature type="binding site" description="axial binding residue">
    <location>
        <position position="118"/>
    </location>
    <ligand>
        <name>heme c</name>
        <dbReference type="ChEBI" id="CHEBI:61717"/>
    </ligand>
    <ligandPart>
        <name>Fe</name>
        <dbReference type="ChEBI" id="CHEBI:18248"/>
    </ligandPart>
</feature>
<feature type="modified residue" description="Pyrrolidone carboxylic acid" evidence="1">
    <location>
        <position position="26"/>
    </location>
</feature>
<feature type="helix" evidence="4">
    <location>
        <begin position="28"/>
        <end position="38"/>
    </location>
</feature>
<feature type="turn" evidence="4">
    <location>
        <begin position="39"/>
        <end position="41"/>
    </location>
</feature>
<feature type="strand" evidence="4">
    <location>
        <begin position="44"/>
        <end position="46"/>
    </location>
</feature>
<feature type="strand" evidence="4">
    <location>
        <begin position="48"/>
        <end position="50"/>
    </location>
</feature>
<feature type="helix" evidence="4">
    <location>
        <begin position="71"/>
        <end position="78"/>
    </location>
</feature>
<feature type="helix" evidence="4">
    <location>
        <begin position="85"/>
        <end position="93"/>
    </location>
</feature>
<feature type="helix" evidence="4">
    <location>
        <begin position="95"/>
        <end position="105"/>
    </location>
</feature>
<feature type="helix" evidence="4">
    <location>
        <begin position="109"/>
        <end position="111"/>
    </location>
</feature>
<feature type="helix" evidence="4">
    <location>
        <begin position="125"/>
        <end position="136"/>
    </location>
</feature>
<organism>
    <name type="scientific">Rhodopseudomonas palustris (strain ATCC BAA-98 / CGA009)</name>
    <dbReference type="NCBI Taxonomy" id="258594"/>
    <lineage>
        <taxon>Bacteria</taxon>
        <taxon>Pseudomonadati</taxon>
        <taxon>Pseudomonadota</taxon>
        <taxon>Alphaproteobacteria</taxon>
        <taxon>Hyphomicrobiales</taxon>
        <taxon>Nitrobacteraceae</taxon>
        <taxon>Rhodopseudomonas</taxon>
    </lineage>
</organism>
<comment type="function">
    <text>Cytochrome c2 is found mainly in purple, non-sulfur, photosynthetic bacteria where it functions as the electron donor to the oxidized bacteriochlorophyll in the photophosphorylation pathway. However, it may also have a role in the respiratory chain and is found in some non-photosynthetic bacteria.</text>
</comment>
<comment type="PTM">
    <text>Binds 1 heme c group covalently per subunit.</text>
</comment>
<comment type="similarity">
    <text evidence="3">Belongs to the cytochrome c family.</text>
</comment>
<reference key="1">
    <citation type="journal article" date="2004" name="Nat. Biotechnol.">
        <title>Complete genome sequence of the metabolically versatile photosynthetic bacterium Rhodopseudomonas palustris.</title>
        <authorList>
            <person name="Larimer F.W."/>
            <person name="Chain P."/>
            <person name="Hauser L."/>
            <person name="Lamerdin J.E."/>
            <person name="Malfatti S."/>
            <person name="Do L."/>
            <person name="Land M.L."/>
            <person name="Pelletier D.A."/>
            <person name="Beatty J.T."/>
            <person name="Lang A.S."/>
            <person name="Tabita F.R."/>
            <person name="Gibson J.L."/>
            <person name="Hanson T.E."/>
            <person name="Bobst C."/>
            <person name="Torres y Torres J.L."/>
            <person name="Peres C."/>
            <person name="Harrison F.H."/>
            <person name="Gibson J."/>
            <person name="Harwood C.S."/>
        </authorList>
    </citation>
    <scope>NUCLEOTIDE SEQUENCE [LARGE SCALE GENOMIC DNA]</scope>
    <source>
        <strain>ATCC BAA-98 / CGA009</strain>
    </source>
</reference>
<reference key="2">
    <citation type="journal article" date="1979" name="Nature">
        <title>Cytochrome c2 sequence variation among the recognised species of purple nonsulphur photosynthetic bacteria.</title>
        <authorList>
            <person name="Ambler R.P."/>
            <person name="Daniel M."/>
            <person name="Hermoso J."/>
            <person name="Meyer T.E."/>
            <person name="Bartsch R.G."/>
            <person name="Kamen M.D."/>
        </authorList>
    </citation>
    <scope>PROTEIN SEQUENCE OF 26-139</scope>
    <source>
        <strain>ATCC 17007 / ATH 2.1.37 / NCIB 11774</strain>
    </source>
</reference>
<proteinExistence type="evidence at protein level"/>